<accession>A1U485</accession>
<comment type="function">
    <text evidence="1">Allows the formation of correctly charged Asn-tRNA(Asn) or Gln-tRNA(Gln) through the transamidation of misacylated Asp-tRNA(Asn) or Glu-tRNA(Gln) in organisms which lack either or both of asparaginyl-tRNA or glutaminyl-tRNA synthetases. The reaction takes place in the presence of glutamine and ATP through an activated phospho-Asp-tRNA(Asn) or phospho-Glu-tRNA(Gln).</text>
</comment>
<comment type="catalytic activity">
    <reaction evidence="1">
        <text>L-glutamyl-tRNA(Gln) + L-glutamine + ATP + H2O = L-glutaminyl-tRNA(Gln) + L-glutamate + ADP + phosphate + H(+)</text>
        <dbReference type="Rhea" id="RHEA:17521"/>
        <dbReference type="Rhea" id="RHEA-COMP:9681"/>
        <dbReference type="Rhea" id="RHEA-COMP:9684"/>
        <dbReference type="ChEBI" id="CHEBI:15377"/>
        <dbReference type="ChEBI" id="CHEBI:15378"/>
        <dbReference type="ChEBI" id="CHEBI:29985"/>
        <dbReference type="ChEBI" id="CHEBI:30616"/>
        <dbReference type="ChEBI" id="CHEBI:43474"/>
        <dbReference type="ChEBI" id="CHEBI:58359"/>
        <dbReference type="ChEBI" id="CHEBI:78520"/>
        <dbReference type="ChEBI" id="CHEBI:78521"/>
        <dbReference type="ChEBI" id="CHEBI:456216"/>
    </reaction>
</comment>
<comment type="catalytic activity">
    <reaction evidence="1">
        <text>L-aspartyl-tRNA(Asn) + L-glutamine + ATP + H2O = L-asparaginyl-tRNA(Asn) + L-glutamate + ADP + phosphate + 2 H(+)</text>
        <dbReference type="Rhea" id="RHEA:14513"/>
        <dbReference type="Rhea" id="RHEA-COMP:9674"/>
        <dbReference type="Rhea" id="RHEA-COMP:9677"/>
        <dbReference type="ChEBI" id="CHEBI:15377"/>
        <dbReference type="ChEBI" id="CHEBI:15378"/>
        <dbReference type="ChEBI" id="CHEBI:29985"/>
        <dbReference type="ChEBI" id="CHEBI:30616"/>
        <dbReference type="ChEBI" id="CHEBI:43474"/>
        <dbReference type="ChEBI" id="CHEBI:58359"/>
        <dbReference type="ChEBI" id="CHEBI:78515"/>
        <dbReference type="ChEBI" id="CHEBI:78516"/>
        <dbReference type="ChEBI" id="CHEBI:456216"/>
    </reaction>
</comment>
<comment type="subunit">
    <text evidence="1">Heterotrimer of A, B and C subunits.</text>
</comment>
<comment type="similarity">
    <text evidence="1">Belongs to the GatC family.</text>
</comment>
<feature type="chain" id="PRO_1000016142" description="Aspartyl/glutamyl-tRNA(Asn/Gln) amidotransferase subunit C">
    <location>
        <begin position="1"/>
        <end position="95"/>
    </location>
</feature>
<proteinExistence type="inferred from homology"/>
<keyword id="KW-0067">ATP-binding</keyword>
<keyword id="KW-0436">Ligase</keyword>
<keyword id="KW-0547">Nucleotide-binding</keyword>
<keyword id="KW-0648">Protein biosynthesis</keyword>
<protein>
    <recommendedName>
        <fullName evidence="1">Aspartyl/glutamyl-tRNA(Asn/Gln) amidotransferase subunit C</fullName>
        <shortName evidence="1">Asp/Glu-ADT subunit C</shortName>
        <ecNumber evidence="1">6.3.5.-</ecNumber>
    </recommendedName>
</protein>
<gene>
    <name evidence="1" type="primary">gatC</name>
    <name type="ordered locus">Maqu_2729</name>
</gene>
<reference key="1">
    <citation type="journal article" date="2011" name="Appl. Environ. Microbiol.">
        <title>Genomic potential of Marinobacter aquaeolei, a biogeochemical 'opportunitroph'.</title>
        <authorList>
            <person name="Singer E."/>
            <person name="Webb E.A."/>
            <person name="Nelson W.C."/>
            <person name="Heidelberg J.F."/>
            <person name="Ivanova N."/>
            <person name="Pati A."/>
            <person name="Edwards K.J."/>
        </authorList>
    </citation>
    <scope>NUCLEOTIDE SEQUENCE [LARGE SCALE GENOMIC DNA]</scope>
    <source>
        <strain>ATCC 700491 / DSM 11845 / VT8</strain>
    </source>
</reference>
<organism>
    <name type="scientific">Marinobacter nauticus (strain ATCC 700491 / DSM 11845 / VT8)</name>
    <name type="common">Marinobacter aquaeolei</name>
    <dbReference type="NCBI Taxonomy" id="351348"/>
    <lineage>
        <taxon>Bacteria</taxon>
        <taxon>Pseudomonadati</taxon>
        <taxon>Pseudomonadota</taxon>
        <taxon>Gammaproteobacteria</taxon>
        <taxon>Pseudomonadales</taxon>
        <taxon>Marinobacteraceae</taxon>
        <taxon>Marinobacter</taxon>
    </lineage>
</organism>
<name>GATC_MARN8</name>
<evidence type="ECO:0000255" key="1">
    <source>
        <dbReference type="HAMAP-Rule" id="MF_00122"/>
    </source>
</evidence>
<sequence length="95" mass="10367">MSISREDIEKVAVLARIKVDGEQVSALEKDLGNILDLVDQLSAADTDAVEPMAHPLDAVQKLRPDVVTETNQREAFQAIAPATEDGLYLVPRVIE</sequence>
<dbReference type="EC" id="6.3.5.-" evidence="1"/>
<dbReference type="EMBL" id="CP000514">
    <property type="protein sequence ID" value="ABM19804.1"/>
    <property type="molecule type" value="Genomic_DNA"/>
</dbReference>
<dbReference type="RefSeq" id="WP_011786174.1">
    <property type="nucleotide sequence ID" value="NC_008740.1"/>
</dbReference>
<dbReference type="SMR" id="A1U485"/>
<dbReference type="STRING" id="351348.Maqu_2729"/>
<dbReference type="KEGG" id="maq:Maqu_2729"/>
<dbReference type="eggNOG" id="COG0721">
    <property type="taxonomic scope" value="Bacteria"/>
</dbReference>
<dbReference type="HOGENOM" id="CLU_105899_2_2_6"/>
<dbReference type="OrthoDB" id="9794326at2"/>
<dbReference type="Proteomes" id="UP000000998">
    <property type="component" value="Chromosome"/>
</dbReference>
<dbReference type="GO" id="GO:0050566">
    <property type="term" value="F:asparaginyl-tRNA synthase (glutamine-hydrolyzing) activity"/>
    <property type="evidence" value="ECO:0007669"/>
    <property type="project" value="RHEA"/>
</dbReference>
<dbReference type="GO" id="GO:0005524">
    <property type="term" value="F:ATP binding"/>
    <property type="evidence" value="ECO:0007669"/>
    <property type="project" value="UniProtKB-KW"/>
</dbReference>
<dbReference type="GO" id="GO:0050567">
    <property type="term" value="F:glutaminyl-tRNA synthase (glutamine-hydrolyzing) activity"/>
    <property type="evidence" value="ECO:0007669"/>
    <property type="project" value="UniProtKB-UniRule"/>
</dbReference>
<dbReference type="GO" id="GO:0070681">
    <property type="term" value="P:glutaminyl-tRNAGln biosynthesis via transamidation"/>
    <property type="evidence" value="ECO:0007669"/>
    <property type="project" value="TreeGrafter"/>
</dbReference>
<dbReference type="GO" id="GO:0006450">
    <property type="term" value="P:regulation of translational fidelity"/>
    <property type="evidence" value="ECO:0007669"/>
    <property type="project" value="InterPro"/>
</dbReference>
<dbReference type="GO" id="GO:0006412">
    <property type="term" value="P:translation"/>
    <property type="evidence" value="ECO:0007669"/>
    <property type="project" value="UniProtKB-UniRule"/>
</dbReference>
<dbReference type="Gene3D" id="1.10.20.60">
    <property type="entry name" value="Glu-tRNAGln amidotransferase C subunit, N-terminal domain"/>
    <property type="match status" value="1"/>
</dbReference>
<dbReference type="HAMAP" id="MF_00122">
    <property type="entry name" value="GatC"/>
    <property type="match status" value="1"/>
</dbReference>
<dbReference type="InterPro" id="IPR036113">
    <property type="entry name" value="Asp/Glu-ADT_sf_sub_c"/>
</dbReference>
<dbReference type="InterPro" id="IPR003837">
    <property type="entry name" value="GatC"/>
</dbReference>
<dbReference type="NCBIfam" id="TIGR00135">
    <property type="entry name" value="gatC"/>
    <property type="match status" value="1"/>
</dbReference>
<dbReference type="PANTHER" id="PTHR15004">
    <property type="entry name" value="GLUTAMYL-TRNA(GLN) AMIDOTRANSFERASE SUBUNIT C, MITOCHONDRIAL"/>
    <property type="match status" value="1"/>
</dbReference>
<dbReference type="PANTHER" id="PTHR15004:SF0">
    <property type="entry name" value="GLUTAMYL-TRNA(GLN) AMIDOTRANSFERASE SUBUNIT C, MITOCHONDRIAL"/>
    <property type="match status" value="1"/>
</dbReference>
<dbReference type="Pfam" id="PF02686">
    <property type="entry name" value="GatC"/>
    <property type="match status" value="1"/>
</dbReference>
<dbReference type="SUPFAM" id="SSF141000">
    <property type="entry name" value="Glu-tRNAGln amidotransferase C subunit"/>
    <property type="match status" value="1"/>
</dbReference>